<protein>
    <recommendedName>
        <fullName>Forkhead box protein G1</fullName>
        <shortName>FoxG1</shortName>
    </recommendedName>
</protein>
<dbReference type="EMBL" id="DQ387962">
    <property type="protein sequence ID" value="ABD38845.1"/>
    <property type="molecule type" value="Genomic_DNA"/>
</dbReference>
<dbReference type="SMR" id="Q1A1A5"/>
<dbReference type="GO" id="GO:0005634">
    <property type="term" value="C:nucleus"/>
    <property type="evidence" value="ECO:0007669"/>
    <property type="project" value="UniProtKB-SubCell"/>
</dbReference>
<dbReference type="GO" id="GO:0003700">
    <property type="term" value="F:DNA-binding transcription factor activity"/>
    <property type="evidence" value="ECO:0007669"/>
    <property type="project" value="InterPro"/>
</dbReference>
<dbReference type="GO" id="GO:1990837">
    <property type="term" value="F:sequence-specific double-stranded DNA binding"/>
    <property type="evidence" value="ECO:0007669"/>
    <property type="project" value="TreeGrafter"/>
</dbReference>
<dbReference type="GO" id="GO:0006357">
    <property type="term" value="P:regulation of transcription by RNA polymerase II"/>
    <property type="evidence" value="ECO:0007669"/>
    <property type="project" value="TreeGrafter"/>
</dbReference>
<dbReference type="CDD" id="cd20021">
    <property type="entry name" value="FH_FOXG"/>
    <property type="match status" value="1"/>
</dbReference>
<dbReference type="FunFam" id="1.10.10.10:FF:000135">
    <property type="entry name" value="forkhead box protein G1"/>
    <property type="match status" value="1"/>
</dbReference>
<dbReference type="Gene3D" id="1.10.10.10">
    <property type="entry name" value="Winged helix-like DNA-binding domain superfamily/Winged helix DNA-binding domain"/>
    <property type="match status" value="1"/>
</dbReference>
<dbReference type="InterPro" id="IPR001766">
    <property type="entry name" value="Fork_head_dom"/>
</dbReference>
<dbReference type="InterPro" id="IPR047208">
    <property type="entry name" value="FOXG1"/>
</dbReference>
<dbReference type="InterPro" id="IPR018122">
    <property type="entry name" value="TF_fork_head_CS_1"/>
</dbReference>
<dbReference type="InterPro" id="IPR030456">
    <property type="entry name" value="TF_fork_head_CS_2"/>
</dbReference>
<dbReference type="InterPro" id="IPR036388">
    <property type="entry name" value="WH-like_DNA-bd_sf"/>
</dbReference>
<dbReference type="InterPro" id="IPR036390">
    <property type="entry name" value="WH_DNA-bd_sf"/>
</dbReference>
<dbReference type="PANTHER" id="PTHR46617">
    <property type="entry name" value="FORKHEAD BOX PROTEIN G1"/>
    <property type="match status" value="1"/>
</dbReference>
<dbReference type="PANTHER" id="PTHR46617:SF3">
    <property type="entry name" value="FORKHEAD BOX PROTEIN G1"/>
    <property type="match status" value="1"/>
</dbReference>
<dbReference type="Pfam" id="PF00250">
    <property type="entry name" value="Forkhead"/>
    <property type="match status" value="1"/>
</dbReference>
<dbReference type="PRINTS" id="PR00053">
    <property type="entry name" value="FORKHEAD"/>
</dbReference>
<dbReference type="SMART" id="SM00339">
    <property type="entry name" value="FH"/>
    <property type="match status" value="1"/>
</dbReference>
<dbReference type="SUPFAM" id="SSF81995">
    <property type="entry name" value="beta-sandwich domain of Sec23/24"/>
    <property type="match status" value="1"/>
</dbReference>
<dbReference type="SUPFAM" id="SSF46785">
    <property type="entry name" value="Winged helix' DNA-binding domain"/>
    <property type="match status" value="1"/>
</dbReference>
<dbReference type="PROSITE" id="PS00657">
    <property type="entry name" value="FORK_HEAD_1"/>
    <property type="match status" value="1"/>
</dbReference>
<dbReference type="PROSITE" id="PS00658">
    <property type="entry name" value="FORK_HEAD_2"/>
    <property type="match status" value="1"/>
</dbReference>
<dbReference type="PROSITE" id="PS50039">
    <property type="entry name" value="FORK_HEAD_3"/>
    <property type="match status" value="1"/>
</dbReference>
<sequence length="489" mass="52321">MLDMGDRKEVKMIPKSSFSINSLVPEAVQNDNHHASHGHHNSHHPQHHHHHHHHHHHPPPPAPQPPPPPQQQPPPPPPPPAPQPPQTRGAPAADDDKGPQQLLLPPPPPPPPAAALDGAKADGLGGKGEPGGGPGELAPVGPDEKEKGAGAGGEEKKGAGEGGKDGEGGKEGEKKNGKYEKPPFSYNALIMMAIRQSPEKRLTLNGIYEFIMKNFPYYRENKQGWQNSIRHNLSLNKCFVKVPRHYDDPGKGNYWMLDPSSDDVFIGGTTGKLRRRSTTSRAKLAFKRGARLTSTGLTFMDRAGSLYWPMSPFLSLHHPRASSTLSYNGTTSAYPSHPMPYSSVLTQNSLGNNHSFSTANGLSVDRLVNGEIPYATHHLTAAALAASVPCGLSVPCSGTYSLNPCSVNLLAGQTSYFFPHVPHPSMTSQSSTSMSARAASSSTSPQAPSTLPCESLRPSLPSFTTGLSGGLSDYFTHQNQGSSSNPLIH</sequence>
<evidence type="ECO:0000250" key="1"/>
<evidence type="ECO:0000250" key="2">
    <source>
        <dbReference type="UniProtKB" id="P55316"/>
    </source>
</evidence>
<evidence type="ECO:0000250" key="3">
    <source>
        <dbReference type="UniProtKB" id="Q60987"/>
    </source>
</evidence>
<evidence type="ECO:0000255" key="4">
    <source>
        <dbReference type="PROSITE-ProRule" id="PRU00089"/>
    </source>
</evidence>
<evidence type="ECO:0000256" key="5">
    <source>
        <dbReference type="SAM" id="MobiDB-lite"/>
    </source>
</evidence>
<name>FOXG1_CHLPG</name>
<feature type="chain" id="PRO_0000254884" description="Forkhead box protein G1">
    <location>
        <begin position="1"/>
        <end position="489"/>
    </location>
</feature>
<feature type="DNA-binding region" description="Fork-head" evidence="4">
    <location>
        <begin position="181"/>
        <end position="275"/>
    </location>
</feature>
<feature type="region of interest" description="Disordered" evidence="5">
    <location>
        <begin position="31"/>
        <end position="181"/>
    </location>
</feature>
<feature type="region of interest" description="Required for interaction with TLE6" evidence="3">
    <location>
        <begin position="249"/>
        <end position="344"/>
    </location>
</feature>
<feature type="region of interest" description="Interaction with KDM5B" evidence="1">
    <location>
        <begin position="383"/>
        <end position="406"/>
    </location>
</feature>
<feature type="region of interest" description="Disordered" evidence="5">
    <location>
        <begin position="427"/>
        <end position="455"/>
    </location>
</feature>
<feature type="compositionally biased region" description="Basic residues" evidence="5">
    <location>
        <begin position="35"/>
        <end position="58"/>
    </location>
</feature>
<feature type="compositionally biased region" description="Pro residues" evidence="5">
    <location>
        <begin position="59"/>
        <end position="85"/>
    </location>
</feature>
<feature type="compositionally biased region" description="Pro residues" evidence="5">
    <location>
        <begin position="104"/>
        <end position="113"/>
    </location>
</feature>
<feature type="compositionally biased region" description="Gly residues" evidence="5">
    <location>
        <begin position="123"/>
        <end position="135"/>
    </location>
</feature>
<feature type="compositionally biased region" description="Basic and acidic residues" evidence="5">
    <location>
        <begin position="142"/>
        <end position="181"/>
    </location>
</feature>
<feature type="compositionally biased region" description="Low complexity" evidence="5">
    <location>
        <begin position="427"/>
        <end position="450"/>
    </location>
</feature>
<proteinExistence type="inferred from homology"/>
<keyword id="KW-0217">Developmental protein</keyword>
<keyword id="KW-0238">DNA-binding</keyword>
<keyword id="KW-0539">Nucleus</keyword>
<keyword id="KW-0656">Proto-oncogene</keyword>
<keyword id="KW-0804">Transcription</keyword>
<keyword id="KW-0805">Transcription regulation</keyword>
<reference key="1">
    <citation type="submission" date="2006-02" db="EMBL/GenBank/DDBJ databases">
        <title>Evolutionary evolution of forkhead box G1.</title>
        <authorList>
            <person name="Bredenkamp N."/>
            <person name="Illing N."/>
        </authorList>
    </citation>
    <scope>NUCLEOTIDE SEQUENCE [GENOMIC DNA]</scope>
</reference>
<gene>
    <name type="primary">FOXG1</name>
</gene>
<organism>
    <name type="scientific">Chlorocebus pygerythrus</name>
    <name type="common">Vervet monkey</name>
    <name type="synonym">Cercopithecus pygerythrus</name>
    <dbReference type="NCBI Taxonomy" id="60710"/>
    <lineage>
        <taxon>Eukaryota</taxon>
        <taxon>Metazoa</taxon>
        <taxon>Chordata</taxon>
        <taxon>Craniata</taxon>
        <taxon>Vertebrata</taxon>
        <taxon>Euteleostomi</taxon>
        <taxon>Mammalia</taxon>
        <taxon>Eutheria</taxon>
        <taxon>Euarchontoglires</taxon>
        <taxon>Primates</taxon>
        <taxon>Haplorrhini</taxon>
        <taxon>Catarrhini</taxon>
        <taxon>Cercopithecidae</taxon>
        <taxon>Cercopithecinae</taxon>
        <taxon>Chlorocebus</taxon>
    </lineage>
</organism>
<accession>Q1A1A5</accession>
<comment type="function">
    <text evidence="2">Transcription repression factor which plays an important role in the establishment of the regional subdivision of the developing brain and in the development of the telencephalon.</text>
</comment>
<comment type="subunit">
    <text evidence="2 3">Interacts with KDM5B (By similarity). Interacts with GRG6/TLE6 (By similarity). Interacts with TLE1; the interaction is inhibited by interaction with TLE6/GRG6 (By similarity).</text>
</comment>
<comment type="subcellular location">
    <subcellularLocation>
        <location evidence="4">Nucleus</location>
    </subcellularLocation>
</comment>